<accession>Q31RF4</accession>
<protein>
    <recommendedName>
        <fullName evidence="1">ATP synthase subunit b'</fullName>
    </recommendedName>
    <alternativeName>
        <fullName evidence="1">ATP synthase F(0) sector subunit b'</fullName>
    </alternativeName>
    <alternativeName>
        <fullName evidence="1">ATPase subunit II</fullName>
    </alternativeName>
    <alternativeName>
        <fullName evidence="1">F-type ATPase subunit b'</fullName>
        <shortName evidence="1">F-ATPase subunit b'</shortName>
    </alternativeName>
</protein>
<organism>
    <name type="scientific">Synechococcus elongatus (strain ATCC 33912 / PCC 7942 / FACHB-805)</name>
    <name type="common">Anacystis nidulans R2</name>
    <dbReference type="NCBI Taxonomy" id="1140"/>
    <lineage>
        <taxon>Bacteria</taxon>
        <taxon>Bacillati</taxon>
        <taxon>Cyanobacteriota</taxon>
        <taxon>Cyanophyceae</taxon>
        <taxon>Synechococcales</taxon>
        <taxon>Synechococcaceae</taxon>
        <taxon>Synechococcus</taxon>
    </lineage>
</organism>
<sequence length="158" mass="17412">MNAWMILAAEAVQEAEGGLFDLDATLPLMAVQILVLVFLLNAVFYKPFGKVLDDRDQFVRGGRQDAKARLAEVKALTAQYEQELAATRKQSQALIAEAQTEAGRIAAQQLAEAQREAQAQREQAQQEIDQQKAVALQALDQQVDALSHQILDKLLARA</sequence>
<dbReference type="EMBL" id="CP000100">
    <property type="protein sequence ID" value="ABB56365.1"/>
    <property type="molecule type" value="Genomic_DNA"/>
</dbReference>
<dbReference type="RefSeq" id="WP_011243492.1">
    <property type="nucleotide sequence ID" value="NZ_JACJTX010000002.1"/>
</dbReference>
<dbReference type="SMR" id="Q31RF4"/>
<dbReference type="STRING" id="1140.Synpcc7942_0333"/>
<dbReference type="PaxDb" id="1140-Synpcc7942_0333"/>
<dbReference type="KEGG" id="syf:Synpcc7942_0333"/>
<dbReference type="eggNOG" id="COG0711">
    <property type="taxonomic scope" value="Bacteria"/>
</dbReference>
<dbReference type="HOGENOM" id="CLU_079215_9_0_3"/>
<dbReference type="OrthoDB" id="426571at2"/>
<dbReference type="BioCyc" id="MetaCyc:SYNPCC7942_0333-MONOMER"/>
<dbReference type="BioCyc" id="SYNEL:SYNPCC7942_0333-MONOMER"/>
<dbReference type="Proteomes" id="UP000889800">
    <property type="component" value="Chromosome"/>
</dbReference>
<dbReference type="GO" id="GO:0031676">
    <property type="term" value="C:plasma membrane-derived thylakoid membrane"/>
    <property type="evidence" value="ECO:0007669"/>
    <property type="project" value="UniProtKB-SubCell"/>
</dbReference>
<dbReference type="GO" id="GO:0045259">
    <property type="term" value="C:proton-transporting ATP synthase complex"/>
    <property type="evidence" value="ECO:0007669"/>
    <property type="project" value="UniProtKB-KW"/>
</dbReference>
<dbReference type="GO" id="GO:0046933">
    <property type="term" value="F:proton-transporting ATP synthase activity, rotational mechanism"/>
    <property type="evidence" value="ECO:0007669"/>
    <property type="project" value="UniProtKB-UniRule"/>
</dbReference>
<dbReference type="GO" id="GO:0046961">
    <property type="term" value="F:proton-transporting ATPase activity, rotational mechanism"/>
    <property type="evidence" value="ECO:0007669"/>
    <property type="project" value="TreeGrafter"/>
</dbReference>
<dbReference type="CDD" id="cd06503">
    <property type="entry name" value="ATP-synt_Fo_b"/>
    <property type="match status" value="1"/>
</dbReference>
<dbReference type="HAMAP" id="MF_01398">
    <property type="entry name" value="ATP_synth_b_bprime"/>
    <property type="match status" value="1"/>
</dbReference>
<dbReference type="HAMAP" id="MF_01399">
    <property type="entry name" value="ATP_synth_bprime"/>
    <property type="match status" value="1"/>
</dbReference>
<dbReference type="InterPro" id="IPR034679">
    <property type="entry name" value="ATP_synth_b"/>
</dbReference>
<dbReference type="InterPro" id="IPR002146">
    <property type="entry name" value="ATP_synth_b/b'su_bac/chlpt"/>
</dbReference>
<dbReference type="InterPro" id="IPR050059">
    <property type="entry name" value="ATP_synthase_B_chain"/>
</dbReference>
<dbReference type="NCBIfam" id="NF005607">
    <property type="entry name" value="PRK07353.1"/>
    <property type="match status" value="1"/>
</dbReference>
<dbReference type="PANTHER" id="PTHR33445">
    <property type="entry name" value="ATP SYNTHASE SUBUNIT B', CHLOROPLASTIC"/>
    <property type="match status" value="1"/>
</dbReference>
<dbReference type="PANTHER" id="PTHR33445:SF2">
    <property type="entry name" value="ATP SYNTHASE SUBUNIT B', CHLOROPLASTIC"/>
    <property type="match status" value="1"/>
</dbReference>
<dbReference type="Pfam" id="PF00430">
    <property type="entry name" value="ATP-synt_B"/>
    <property type="match status" value="1"/>
</dbReference>
<proteinExistence type="inferred from homology"/>
<reference key="1">
    <citation type="submission" date="2005-08" db="EMBL/GenBank/DDBJ databases">
        <title>Complete sequence of chromosome 1 of Synechococcus elongatus PCC 7942.</title>
        <authorList>
            <consortium name="US DOE Joint Genome Institute"/>
            <person name="Copeland A."/>
            <person name="Lucas S."/>
            <person name="Lapidus A."/>
            <person name="Barry K."/>
            <person name="Detter J.C."/>
            <person name="Glavina T."/>
            <person name="Hammon N."/>
            <person name="Israni S."/>
            <person name="Pitluck S."/>
            <person name="Schmutz J."/>
            <person name="Larimer F."/>
            <person name="Land M."/>
            <person name="Kyrpides N."/>
            <person name="Lykidis A."/>
            <person name="Golden S."/>
            <person name="Richardson P."/>
        </authorList>
    </citation>
    <scope>NUCLEOTIDE SEQUENCE [LARGE SCALE GENOMIC DNA]</scope>
    <source>
        <strain>ATCC 33912 / PCC 7942 / FACHB-805</strain>
    </source>
</reference>
<feature type="chain" id="PRO_0000369050" description="ATP synthase subunit b'">
    <location>
        <begin position="1"/>
        <end position="158"/>
    </location>
</feature>
<feature type="transmembrane region" description="Helical" evidence="1">
    <location>
        <begin position="24"/>
        <end position="44"/>
    </location>
</feature>
<gene>
    <name evidence="1" type="primary">atpF2</name>
    <name evidence="1" type="synonym">atpG</name>
    <name type="ordered locus">Synpcc7942_0333</name>
</gene>
<keyword id="KW-0066">ATP synthesis</keyword>
<keyword id="KW-0138">CF(0)</keyword>
<keyword id="KW-0375">Hydrogen ion transport</keyword>
<keyword id="KW-0406">Ion transport</keyword>
<keyword id="KW-0472">Membrane</keyword>
<keyword id="KW-1185">Reference proteome</keyword>
<keyword id="KW-0793">Thylakoid</keyword>
<keyword id="KW-0812">Transmembrane</keyword>
<keyword id="KW-1133">Transmembrane helix</keyword>
<keyword id="KW-0813">Transport</keyword>
<comment type="function">
    <text evidence="1">F(1)F(0) ATP synthase produces ATP from ADP in the presence of a proton or sodium gradient. F-type ATPases consist of two structural domains, F(1) containing the extramembraneous catalytic core and F(0) containing the membrane proton channel, linked together by a central stalk and a peripheral stalk. During catalysis, ATP synthesis in the catalytic domain of F(1) is coupled via a rotary mechanism of the central stalk subunits to proton translocation.</text>
</comment>
<comment type="function">
    <text evidence="1">Component of the F(0) channel, it forms part of the peripheral stalk, linking F(1) to F(0). The b'-subunit is a diverged and duplicated form of b found in plants and photosynthetic bacteria.</text>
</comment>
<comment type="subunit">
    <text evidence="1">F-type ATPases have 2 components, F(1) - the catalytic core - and F(0) - the membrane proton channel. F(1) has five subunits: alpha(3), beta(3), gamma(1), delta(1), epsilon(1). F(0) has four main subunits: a(1), b(1), b'(1) and c(10-14). The alpha and beta chains form an alternating ring which encloses part of the gamma chain. F(1) is attached to F(0) by a central stalk formed by the gamma and epsilon chains, while a peripheral stalk is formed by the delta, b and b' chains.</text>
</comment>
<comment type="subcellular location">
    <subcellularLocation>
        <location evidence="1">Cellular thylakoid membrane</location>
        <topology evidence="1">Single-pass membrane protein</topology>
    </subcellularLocation>
</comment>
<comment type="similarity">
    <text evidence="1">Belongs to the ATPase B chain family.</text>
</comment>
<evidence type="ECO:0000255" key="1">
    <source>
        <dbReference type="HAMAP-Rule" id="MF_01399"/>
    </source>
</evidence>
<name>ATPF2_SYNE7</name>